<accession>P11740</accession>
<proteinExistence type="evidence at protein level"/>
<comment type="subunit">
    <text>The giant hemoglobins of worms are formed of a monomeric subunit and a disulfide-bonded trimer. This subunit is monomeric.</text>
</comment>
<comment type="subcellular location">
    <subcellularLocation>
        <location>Secreted</location>
    </subcellularLocation>
</comment>
<comment type="similarity">
    <text evidence="1">Belongs to the globin family.</text>
</comment>
<feature type="chain" id="PRO_0000052508" description="Extracellular globin-1">
    <location>
        <begin position="1"/>
        <end position="141"/>
    </location>
</feature>
<feature type="domain" description="Globin" evidence="1">
    <location>
        <begin position="1"/>
        <end position="141"/>
    </location>
</feature>
<feature type="binding site" description="proximal binding residue" evidence="1">
    <location>
        <position position="94"/>
    </location>
    <ligand>
        <name>heme b</name>
        <dbReference type="ChEBI" id="CHEBI:60344"/>
    </ligand>
    <ligandPart>
        <name>Fe</name>
        <dbReference type="ChEBI" id="CHEBI:18248"/>
    </ligandPart>
</feature>
<feature type="disulfide bond">
    <location>
        <begin position="2"/>
        <end position="131"/>
    </location>
</feature>
<reference key="1">
    <citation type="journal article" date="1989" name="Eur. J. Biochem.">
        <title>Amino acid sequence of the monomer subunit of the giant multisubunit hemoglobin from the earthworm Pheretima sieboldi.</title>
        <authorList>
            <person name="Suzuki T."/>
        </authorList>
    </citation>
    <scope>PROTEIN SEQUENCE</scope>
</reference>
<organism>
    <name type="scientific">Metaphire sieboldi</name>
    <name type="common">Earthworm</name>
    <name type="synonym">Pheretima sieboldi</name>
    <dbReference type="NCBI Taxonomy" id="506672"/>
    <lineage>
        <taxon>Eukaryota</taxon>
        <taxon>Metazoa</taxon>
        <taxon>Spiralia</taxon>
        <taxon>Lophotrochozoa</taxon>
        <taxon>Annelida</taxon>
        <taxon>Clitellata</taxon>
        <taxon>Oligochaeta</taxon>
        <taxon>Crassiclitellata</taxon>
        <taxon>Megascolecida</taxon>
        <taxon>Megascolecidae</taxon>
        <taxon>Metaphire</taxon>
    </lineage>
</organism>
<dbReference type="PIR" id="S06483">
    <property type="entry name" value="S06483"/>
</dbReference>
<dbReference type="SMR" id="P11740"/>
<dbReference type="GO" id="GO:0005576">
    <property type="term" value="C:extracellular region"/>
    <property type="evidence" value="ECO:0007669"/>
    <property type="project" value="UniProtKB-SubCell"/>
</dbReference>
<dbReference type="GO" id="GO:0005833">
    <property type="term" value="C:hemoglobin complex"/>
    <property type="evidence" value="ECO:0007669"/>
    <property type="project" value="InterPro"/>
</dbReference>
<dbReference type="GO" id="GO:0020037">
    <property type="term" value="F:heme binding"/>
    <property type="evidence" value="ECO:0007669"/>
    <property type="project" value="InterPro"/>
</dbReference>
<dbReference type="GO" id="GO:0005506">
    <property type="term" value="F:iron ion binding"/>
    <property type="evidence" value="ECO:0007669"/>
    <property type="project" value="InterPro"/>
</dbReference>
<dbReference type="GO" id="GO:0019825">
    <property type="term" value="F:oxygen binding"/>
    <property type="evidence" value="ECO:0007669"/>
    <property type="project" value="InterPro"/>
</dbReference>
<dbReference type="GO" id="GO:0005344">
    <property type="term" value="F:oxygen carrier activity"/>
    <property type="evidence" value="ECO:0007669"/>
    <property type="project" value="UniProtKB-KW"/>
</dbReference>
<dbReference type="CDD" id="cd01040">
    <property type="entry name" value="Mb-like"/>
    <property type="match status" value="1"/>
</dbReference>
<dbReference type="Gene3D" id="1.10.490.10">
    <property type="entry name" value="Globins"/>
    <property type="match status" value="1"/>
</dbReference>
<dbReference type="InterPro" id="IPR000971">
    <property type="entry name" value="Globin"/>
</dbReference>
<dbReference type="InterPro" id="IPR009050">
    <property type="entry name" value="Globin-like_sf"/>
</dbReference>
<dbReference type="InterPro" id="IPR012292">
    <property type="entry name" value="Globin/Proto"/>
</dbReference>
<dbReference type="InterPro" id="IPR014610">
    <property type="entry name" value="Haemoglobin_extracell"/>
</dbReference>
<dbReference type="InterPro" id="IPR044399">
    <property type="entry name" value="Mb-like_M"/>
</dbReference>
<dbReference type="PANTHER" id="PTHR47217">
    <property type="entry name" value="GLOBIN-LIKE PROTEIN"/>
    <property type="match status" value="1"/>
</dbReference>
<dbReference type="PANTHER" id="PTHR47217:SF1">
    <property type="entry name" value="GLOBIN-LIKE PROTEIN"/>
    <property type="match status" value="1"/>
</dbReference>
<dbReference type="Pfam" id="PF00042">
    <property type="entry name" value="Globin"/>
    <property type="match status" value="1"/>
</dbReference>
<dbReference type="PIRSF" id="PIRSF036517">
    <property type="entry name" value="Ext_hemo"/>
    <property type="match status" value="1"/>
</dbReference>
<dbReference type="SUPFAM" id="SSF46458">
    <property type="entry name" value="Globin-like"/>
    <property type="match status" value="1"/>
</dbReference>
<dbReference type="PROSITE" id="PS01033">
    <property type="entry name" value="GLOBIN"/>
    <property type="match status" value="1"/>
</dbReference>
<keyword id="KW-0903">Direct protein sequencing</keyword>
<keyword id="KW-1015">Disulfide bond</keyword>
<keyword id="KW-0349">Heme</keyword>
<keyword id="KW-0408">Iron</keyword>
<keyword id="KW-0479">Metal-binding</keyword>
<keyword id="KW-0561">Oxygen transport</keyword>
<keyword id="KW-0964">Secreted</keyword>
<keyword id="KW-0813">Transport</keyword>
<sequence>DCNTLKRFKVKHQWQQVFSGEHHRTEFSLHFWKEFLHDHPDLVSLFKRVQGENIYSPEFQAHGIRVLAGLDSVIGVLDEDDTFTVQLAHLKAQHTERGTKPEYFDLFGTQLFDILGDKLGTHFDQAAWRDCYAVIAAGIKP</sequence>
<evidence type="ECO:0000255" key="1">
    <source>
        <dbReference type="PROSITE-ProRule" id="PRU00238"/>
    </source>
</evidence>
<name>GLB1_METSO</name>
<protein>
    <recommendedName>
        <fullName>Extracellular globin-1</fullName>
    </recommendedName>
    <alternativeName>
        <fullName>Erythrocruorin</fullName>
    </alternativeName>
    <alternativeName>
        <fullName>Globin I</fullName>
    </alternativeName>
</protein>